<proteinExistence type="evidence at protein level"/>
<dbReference type="EMBL" id="AJ248284">
    <property type="protein sequence ID" value="CAB49449.1"/>
    <property type="molecule type" value="Genomic_DNA"/>
</dbReference>
<dbReference type="EMBL" id="HE613800">
    <property type="protein sequence ID" value="CCE69916.1"/>
    <property type="molecule type" value="Genomic_DNA"/>
</dbReference>
<dbReference type="PIR" id="B75171">
    <property type="entry name" value="B75171"/>
</dbReference>
<dbReference type="RefSeq" id="WP_010867651.1">
    <property type="nucleotide sequence ID" value="NC_000868.1"/>
</dbReference>
<dbReference type="PDB" id="6SW9">
    <property type="method" value="EM"/>
    <property type="resolution" value="4.20 A"/>
    <property type="chains" value="O=1-148"/>
</dbReference>
<dbReference type="PDB" id="6SWC">
    <property type="method" value="EM"/>
    <property type="resolution" value="3.30 A"/>
    <property type="chains" value="O=1-148"/>
</dbReference>
<dbReference type="PDB" id="6SWE">
    <property type="method" value="EM"/>
    <property type="resolution" value="3.10 A"/>
    <property type="chains" value="O=1-148"/>
</dbReference>
<dbReference type="PDB" id="7ZAG">
    <property type="method" value="EM"/>
    <property type="resolution" value="2.77 A"/>
    <property type="chains" value="O=1-148"/>
</dbReference>
<dbReference type="PDB" id="7ZAH">
    <property type="method" value="EM"/>
    <property type="resolution" value="2.70 A"/>
    <property type="chains" value="O=1-148"/>
</dbReference>
<dbReference type="PDB" id="7ZAI">
    <property type="method" value="EM"/>
    <property type="resolution" value="2.60 A"/>
    <property type="chains" value="O=1-148"/>
</dbReference>
<dbReference type="PDB" id="7ZHG">
    <property type="method" value="EM"/>
    <property type="resolution" value="2.25 A"/>
    <property type="chains" value="O=1-148"/>
</dbReference>
<dbReference type="PDBsum" id="6SW9"/>
<dbReference type="PDBsum" id="6SWC"/>
<dbReference type="PDBsum" id="6SWE"/>
<dbReference type="PDBsum" id="7ZAG"/>
<dbReference type="PDBsum" id="7ZAH"/>
<dbReference type="PDBsum" id="7ZAI"/>
<dbReference type="PDBsum" id="7ZHG"/>
<dbReference type="EMDB" id="EMD-10320"/>
<dbReference type="EMDB" id="EMD-10322"/>
<dbReference type="EMDB" id="EMD-10324"/>
<dbReference type="EMDB" id="EMD-14579"/>
<dbReference type="EMDB" id="EMD-14580"/>
<dbReference type="EMDB" id="EMD-14581"/>
<dbReference type="EMDB" id="EMD-14731"/>
<dbReference type="EMDB" id="EMD-8148"/>
<dbReference type="SMR" id="Q9V1A0"/>
<dbReference type="STRING" id="272844.PAB0360"/>
<dbReference type="KEGG" id="pab:PAB0360"/>
<dbReference type="PATRIC" id="fig|272844.11.peg.562"/>
<dbReference type="eggNOG" id="arCOG01722">
    <property type="taxonomic scope" value="Archaea"/>
</dbReference>
<dbReference type="HOGENOM" id="CLU_103849_0_0_2"/>
<dbReference type="OrthoDB" id="372127at2157"/>
<dbReference type="PhylomeDB" id="Q9V1A0"/>
<dbReference type="Proteomes" id="UP000000810">
    <property type="component" value="Chromosome"/>
</dbReference>
<dbReference type="Proteomes" id="UP000009139">
    <property type="component" value="Chromosome"/>
</dbReference>
<dbReference type="GO" id="GO:0005829">
    <property type="term" value="C:cytosol"/>
    <property type="evidence" value="ECO:0007669"/>
    <property type="project" value="TreeGrafter"/>
</dbReference>
<dbReference type="GO" id="GO:0015935">
    <property type="term" value="C:small ribosomal subunit"/>
    <property type="evidence" value="ECO:0007669"/>
    <property type="project" value="TreeGrafter"/>
</dbReference>
<dbReference type="GO" id="GO:0019843">
    <property type="term" value="F:rRNA binding"/>
    <property type="evidence" value="ECO:0007669"/>
    <property type="project" value="UniProtKB-UniRule"/>
</dbReference>
<dbReference type="GO" id="GO:0003735">
    <property type="term" value="F:structural constituent of ribosome"/>
    <property type="evidence" value="ECO:0007669"/>
    <property type="project" value="InterPro"/>
</dbReference>
<dbReference type="GO" id="GO:0006412">
    <property type="term" value="P:translation"/>
    <property type="evidence" value="ECO:0007669"/>
    <property type="project" value="UniProtKB-UniRule"/>
</dbReference>
<dbReference type="FunFam" id="1.10.8.50:FF:000001">
    <property type="entry name" value="30S ribosomal protein S13"/>
    <property type="match status" value="1"/>
</dbReference>
<dbReference type="FunFam" id="4.10.910.10:FF:000002">
    <property type="entry name" value="40S ribosomal protein S18"/>
    <property type="match status" value="1"/>
</dbReference>
<dbReference type="Gene3D" id="1.10.8.50">
    <property type="match status" value="1"/>
</dbReference>
<dbReference type="Gene3D" id="4.10.910.10">
    <property type="entry name" value="30s ribosomal protein s13, domain 2"/>
    <property type="match status" value="1"/>
</dbReference>
<dbReference type="HAMAP" id="MF_01315">
    <property type="entry name" value="Ribosomal_uS13"/>
    <property type="match status" value="1"/>
</dbReference>
<dbReference type="InterPro" id="IPR027437">
    <property type="entry name" value="Rbsml_uS13_C"/>
</dbReference>
<dbReference type="InterPro" id="IPR001892">
    <property type="entry name" value="Ribosomal_uS13"/>
</dbReference>
<dbReference type="InterPro" id="IPR010979">
    <property type="entry name" value="Ribosomal_uS13-like_H2TH"/>
</dbReference>
<dbReference type="InterPro" id="IPR019977">
    <property type="entry name" value="Ribosomal_uS13_archaeal"/>
</dbReference>
<dbReference type="InterPro" id="IPR018269">
    <property type="entry name" value="Ribosomal_uS13_CS"/>
</dbReference>
<dbReference type="NCBIfam" id="NF003140">
    <property type="entry name" value="PRK04053.1"/>
    <property type="match status" value="1"/>
</dbReference>
<dbReference type="NCBIfam" id="TIGR03629">
    <property type="entry name" value="uS13_arch"/>
    <property type="match status" value="1"/>
</dbReference>
<dbReference type="PANTHER" id="PTHR10871">
    <property type="entry name" value="30S RIBOSOMAL PROTEIN S13/40S RIBOSOMAL PROTEIN S18"/>
    <property type="match status" value="1"/>
</dbReference>
<dbReference type="PANTHER" id="PTHR10871:SF3">
    <property type="entry name" value="SMALL RIBOSOMAL SUBUNIT PROTEIN US13"/>
    <property type="match status" value="1"/>
</dbReference>
<dbReference type="Pfam" id="PF00416">
    <property type="entry name" value="Ribosomal_S13"/>
    <property type="match status" value="1"/>
</dbReference>
<dbReference type="PIRSF" id="PIRSF002134">
    <property type="entry name" value="Ribosomal_S13"/>
    <property type="match status" value="1"/>
</dbReference>
<dbReference type="SUPFAM" id="SSF46946">
    <property type="entry name" value="S13-like H2TH domain"/>
    <property type="match status" value="1"/>
</dbReference>
<dbReference type="PROSITE" id="PS00646">
    <property type="entry name" value="RIBOSOMAL_S13_1"/>
    <property type="match status" value="1"/>
</dbReference>
<dbReference type="PROSITE" id="PS50159">
    <property type="entry name" value="RIBOSOMAL_S13_2"/>
    <property type="match status" value="1"/>
</dbReference>
<reference key="1">
    <citation type="journal article" date="2003" name="Mol. Microbiol.">
        <title>An integrated analysis of the genome of the hyperthermophilic archaeon Pyrococcus abyssi.</title>
        <authorList>
            <person name="Cohen G.N."/>
            <person name="Barbe V."/>
            <person name="Flament D."/>
            <person name="Galperin M."/>
            <person name="Heilig R."/>
            <person name="Lecompte O."/>
            <person name="Poch O."/>
            <person name="Prieur D."/>
            <person name="Querellou J."/>
            <person name="Ripp R."/>
            <person name="Thierry J.-C."/>
            <person name="Van der Oost J."/>
            <person name="Weissenbach J."/>
            <person name="Zivanovic Y."/>
            <person name="Forterre P."/>
        </authorList>
    </citation>
    <scope>NUCLEOTIDE SEQUENCE [LARGE SCALE GENOMIC DNA]</scope>
    <source>
        <strain>GE5 / Orsay</strain>
    </source>
</reference>
<reference key="2">
    <citation type="journal article" date="2012" name="Curr. Microbiol.">
        <title>Re-annotation of two hyperthermophilic archaea Pyrococcus abyssi GE5 and Pyrococcus furiosus DSM 3638.</title>
        <authorList>
            <person name="Gao J."/>
            <person name="Wang J."/>
        </authorList>
    </citation>
    <scope>GENOME REANNOTATION</scope>
    <source>
        <strain>GE5 / Orsay</strain>
    </source>
</reference>
<feature type="chain" id="PRO_0000132185" description="Small ribosomal subunit protein uS13">
    <location>
        <begin position="1"/>
        <end position="148"/>
    </location>
</feature>
<feature type="strand" evidence="4">
    <location>
        <begin position="6"/>
        <end position="10"/>
    </location>
</feature>
<feature type="strand" evidence="4">
    <location>
        <begin position="13"/>
        <end position="20"/>
    </location>
</feature>
<feature type="helix" evidence="4">
    <location>
        <begin position="21"/>
        <end position="24"/>
    </location>
</feature>
<feature type="helix" evidence="4">
    <location>
        <begin position="25"/>
        <end position="27"/>
    </location>
</feature>
<feature type="helix" evidence="4">
    <location>
        <begin position="33"/>
        <end position="43"/>
    </location>
</feature>
<feature type="strand" evidence="3">
    <location>
        <begin position="47"/>
        <end position="50"/>
    </location>
</feature>
<feature type="helix" evidence="4">
    <location>
        <begin position="51"/>
        <end position="53"/>
    </location>
</feature>
<feature type="helix" evidence="4">
    <location>
        <begin position="56"/>
        <end position="67"/>
    </location>
</feature>
<feature type="helix" evidence="4">
    <location>
        <begin position="70"/>
        <end position="72"/>
    </location>
</feature>
<feature type="strand" evidence="4">
    <location>
        <begin position="78"/>
        <end position="81"/>
    </location>
</feature>
<feature type="turn" evidence="4">
    <location>
        <begin position="85"/>
        <end position="87"/>
    </location>
</feature>
<feature type="helix" evidence="4">
    <location>
        <begin position="96"/>
        <end position="111"/>
    </location>
</feature>
<feature type="helix" evidence="4">
    <location>
        <begin position="115"/>
        <end position="122"/>
    </location>
</feature>
<feature type="strand" evidence="4">
    <location>
        <begin position="132"/>
        <end position="134"/>
    </location>
</feature>
<keyword id="KW-0002">3D-structure</keyword>
<keyword id="KW-0687">Ribonucleoprotein</keyword>
<keyword id="KW-0689">Ribosomal protein</keyword>
<keyword id="KW-0694">RNA-binding</keyword>
<keyword id="KW-0699">rRNA-binding</keyword>
<organism>
    <name type="scientific">Pyrococcus abyssi (strain GE5 / Orsay)</name>
    <dbReference type="NCBI Taxonomy" id="272844"/>
    <lineage>
        <taxon>Archaea</taxon>
        <taxon>Methanobacteriati</taxon>
        <taxon>Methanobacteriota</taxon>
        <taxon>Thermococci</taxon>
        <taxon>Thermococcales</taxon>
        <taxon>Thermococcaceae</taxon>
        <taxon>Pyrococcus</taxon>
    </lineage>
</organism>
<accession>Q9V1A0</accession>
<accession>G8ZGN7</accession>
<name>RS13_PYRAB</name>
<evidence type="ECO:0000255" key="1">
    <source>
        <dbReference type="HAMAP-Rule" id="MF_01315"/>
    </source>
</evidence>
<evidence type="ECO:0000305" key="2"/>
<evidence type="ECO:0007829" key="3">
    <source>
        <dbReference type="PDB" id="6SWC"/>
    </source>
</evidence>
<evidence type="ECO:0007829" key="4">
    <source>
        <dbReference type="PDB" id="7ZHG"/>
    </source>
</evidence>
<comment type="function">
    <text evidence="1">Located at the top of the head of the 30S subunit, it contacts several helices of the 16S rRNA. In the 70S ribosome it contacts the 23S rRNA (bridge B1a) and protein L5 of the 50S subunit (bridge B1b), connecting the 2 subunits; these bridges are implicated in subunit movement.</text>
</comment>
<comment type="subunit">
    <text evidence="1">Part of the 30S ribosomal subunit. Forms a loose heterodimer with protein S19. Forms two bridges to the 50S subunit in the 70S ribosome.</text>
</comment>
<comment type="similarity">
    <text evidence="1">Belongs to the universal ribosomal protein uS13 family.</text>
</comment>
<sequence>MADFRHIVRVAGVDLDGNKQLRWALTAIKGVGINFATMVCRVAGLDPFMKAGYLTDEQVKKIEEILQDPVAHGIPRWAVNRPKDYETGRDLHLITAKLDMAIREDIMRLRRIRAYRGIRHELGLPVRGQRTRSNFRRGQTVGVSRKKK</sequence>
<protein>
    <recommendedName>
        <fullName evidence="1">Small ribosomal subunit protein uS13</fullName>
    </recommendedName>
    <alternativeName>
        <fullName evidence="2">30S ribosomal protein S13</fullName>
    </alternativeName>
</protein>
<gene>
    <name evidence="1" type="primary">rps13</name>
    <name type="ordered locus">PYRAB05270</name>
    <name type="ORF">PAB0360</name>
</gene>